<proteinExistence type="inferred from homology"/>
<evidence type="ECO:0000255" key="1">
    <source>
        <dbReference type="HAMAP-Rule" id="MF_00197"/>
    </source>
</evidence>
<comment type="function">
    <text evidence="1">Catalyzes the stereoinversion of LL-2,6-diaminopimelate (L,L-DAP) to meso-diaminopimelate (meso-DAP), a precursor of L-lysine and an essential component of the bacterial peptidoglycan.</text>
</comment>
<comment type="catalytic activity">
    <reaction evidence="1">
        <text>(2S,6S)-2,6-diaminopimelate = meso-2,6-diaminopimelate</text>
        <dbReference type="Rhea" id="RHEA:15393"/>
        <dbReference type="ChEBI" id="CHEBI:57609"/>
        <dbReference type="ChEBI" id="CHEBI:57791"/>
        <dbReference type="EC" id="5.1.1.7"/>
    </reaction>
</comment>
<comment type="pathway">
    <text evidence="1">Amino-acid biosynthesis; L-lysine biosynthesis via DAP pathway; DL-2,6-diaminopimelate from LL-2,6-diaminopimelate: step 1/1.</text>
</comment>
<comment type="subunit">
    <text evidence="1">Homodimer.</text>
</comment>
<comment type="subcellular location">
    <subcellularLocation>
        <location evidence="1">Cytoplasm</location>
    </subcellularLocation>
</comment>
<comment type="similarity">
    <text evidence="1">Belongs to the diaminopimelate epimerase family.</text>
</comment>
<gene>
    <name evidence="1" type="primary">dapF</name>
    <name type="ordered locus">BMA10229_A2167</name>
</gene>
<sequence length="289" mass="30899">MKLSFTKMHGAGNDFVVLDGYTRALPPLTGAQVRALADRHFGIGADQLLLVEKPTVDGADFKYRIFNCDGGEVEHCGNGARCFVKFVRDHGLTGKASVRVEVKHGVITLTMQDNGEVVVDMGAPVFEPARVPFDASGLDGRREGADTLWPLPVNGVTRWISVVSMGNPHAVQIVDDAEAFAVRVDGPAIERDPRFPQRVNAGFMQIVSRHEVNLRVYERGAGETLACGTGACAAVAAGIRRGRLDSPVTVHTHGGTLTISWNGACDERAPLMMAGPATTVFEGVIELPA</sequence>
<organism>
    <name type="scientific">Burkholderia mallei (strain NCTC 10229)</name>
    <dbReference type="NCBI Taxonomy" id="412022"/>
    <lineage>
        <taxon>Bacteria</taxon>
        <taxon>Pseudomonadati</taxon>
        <taxon>Pseudomonadota</taxon>
        <taxon>Betaproteobacteria</taxon>
        <taxon>Burkholderiales</taxon>
        <taxon>Burkholderiaceae</taxon>
        <taxon>Burkholderia</taxon>
        <taxon>pseudomallei group</taxon>
    </lineage>
</organism>
<name>DAPF_BURM9</name>
<protein>
    <recommendedName>
        <fullName evidence="1">Diaminopimelate epimerase</fullName>
        <shortName evidence="1">DAP epimerase</shortName>
        <ecNumber evidence="1">5.1.1.7</ecNumber>
    </recommendedName>
    <alternativeName>
        <fullName evidence="1">PLP-independent amino acid racemase</fullName>
    </alternativeName>
</protein>
<reference key="1">
    <citation type="journal article" date="2010" name="Genome Biol. Evol.">
        <title>Continuing evolution of Burkholderia mallei through genome reduction and large-scale rearrangements.</title>
        <authorList>
            <person name="Losada L."/>
            <person name="Ronning C.M."/>
            <person name="DeShazer D."/>
            <person name="Woods D."/>
            <person name="Fedorova N."/>
            <person name="Kim H.S."/>
            <person name="Shabalina S.A."/>
            <person name="Pearson T.R."/>
            <person name="Brinkac L."/>
            <person name="Tan P."/>
            <person name="Nandi T."/>
            <person name="Crabtree J."/>
            <person name="Badger J."/>
            <person name="Beckstrom-Sternberg S."/>
            <person name="Saqib M."/>
            <person name="Schutzer S.E."/>
            <person name="Keim P."/>
            <person name="Nierman W.C."/>
        </authorList>
    </citation>
    <scope>NUCLEOTIDE SEQUENCE [LARGE SCALE GENOMIC DNA]</scope>
    <source>
        <strain>NCTC 10229</strain>
    </source>
</reference>
<keyword id="KW-0028">Amino-acid biosynthesis</keyword>
<keyword id="KW-0963">Cytoplasm</keyword>
<keyword id="KW-0413">Isomerase</keyword>
<keyword id="KW-0457">Lysine biosynthesis</keyword>
<feature type="chain" id="PRO_1000011855" description="Diaminopimelate epimerase">
    <location>
        <begin position="1"/>
        <end position="289"/>
    </location>
</feature>
<feature type="active site" description="Proton donor" evidence="1">
    <location>
        <position position="76"/>
    </location>
</feature>
<feature type="active site" description="Proton acceptor" evidence="1">
    <location>
        <position position="227"/>
    </location>
</feature>
<feature type="binding site" evidence="1">
    <location>
        <position position="13"/>
    </location>
    <ligand>
        <name>substrate</name>
    </ligand>
</feature>
<feature type="binding site" evidence="1">
    <location>
        <position position="47"/>
    </location>
    <ligand>
        <name>substrate</name>
    </ligand>
</feature>
<feature type="binding site" evidence="1">
    <location>
        <position position="67"/>
    </location>
    <ligand>
        <name>substrate</name>
    </ligand>
</feature>
<feature type="binding site" evidence="1">
    <location>
        <begin position="77"/>
        <end position="78"/>
    </location>
    <ligand>
        <name>substrate</name>
    </ligand>
</feature>
<feature type="binding site" evidence="1">
    <location>
        <position position="167"/>
    </location>
    <ligand>
        <name>substrate</name>
    </ligand>
</feature>
<feature type="binding site" evidence="1">
    <location>
        <position position="200"/>
    </location>
    <ligand>
        <name>substrate</name>
    </ligand>
</feature>
<feature type="binding site" evidence="1">
    <location>
        <begin position="218"/>
        <end position="219"/>
    </location>
    <ligand>
        <name>substrate</name>
    </ligand>
</feature>
<feature type="binding site" evidence="1">
    <location>
        <begin position="228"/>
        <end position="229"/>
    </location>
    <ligand>
        <name>substrate</name>
    </ligand>
</feature>
<feature type="site" description="Could be important to modulate the pK values of the two catalytic cysteine residues" evidence="1">
    <location>
        <position position="169"/>
    </location>
</feature>
<feature type="site" description="Could be important to modulate the pK values of the two catalytic cysteine residues" evidence="1">
    <location>
        <position position="218"/>
    </location>
</feature>
<accession>A2S862</accession>
<dbReference type="EC" id="5.1.1.7" evidence="1"/>
<dbReference type="EMBL" id="CP000546">
    <property type="protein sequence ID" value="ABN02872.1"/>
    <property type="molecule type" value="Genomic_DNA"/>
</dbReference>
<dbReference type="RefSeq" id="WP_004199067.1">
    <property type="nucleotide sequence ID" value="NC_008836.1"/>
</dbReference>
<dbReference type="SMR" id="A2S862"/>
<dbReference type="GeneID" id="93058719"/>
<dbReference type="KEGG" id="bml:BMA10229_A2167"/>
<dbReference type="HOGENOM" id="CLU_053306_1_1_4"/>
<dbReference type="UniPathway" id="UPA00034">
    <property type="reaction ID" value="UER00025"/>
</dbReference>
<dbReference type="Proteomes" id="UP000002283">
    <property type="component" value="Chromosome I"/>
</dbReference>
<dbReference type="GO" id="GO:0005829">
    <property type="term" value="C:cytosol"/>
    <property type="evidence" value="ECO:0007669"/>
    <property type="project" value="TreeGrafter"/>
</dbReference>
<dbReference type="GO" id="GO:0008837">
    <property type="term" value="F:diaminopimelate epimerase activity"/>
    <property type="evidence" value="ECO:0007669"/>
    <property type="project" value="UniProtKB-UniRule"/>
</dbReference>
<dbReference type="GO" id="GO:0009089">
    <property type="term" value="P:lysine biosynthetic process via diaminopimelate"/>
    <property type="evidence" value="ECO:0007669"/>
    <property type="project" value="UniProtKB-UniRule"/>
</dbReference>
<dbReference type="FunFam" id="3.10.310.10:FF:000001">
    <property type="entry name" value="Diaminopimelate epimerase"/>
    <property type="match status" value="1"/>
</dbReference>
<dbReference type="Gene3D" id="3.10.310.10">
    <property type="entry name" value="Diaminopimelate Epimerase, Chain A, domain 1"/>
    <property type="match status" value="2"/>
</dbReference>
<dbReference type="HAMAP" id="MF_00197">
    <property type="entry name" value="DAP_epimerase"/>
    <property type="match status" value="1"/>
</dbReference>
<dbReference type="InterPro" id="IPR018510">
    <property type="entry name" value="DAP_epimerase_AS"/>
</dbReference>
<dbReference type="InterPro" id="IPR001653">
    <property type="entry name" value="DAP_epimerase_DapF"/>
</dbReference>
<dbReference type="NCBIfam" id="TIGR00652">
    <property type="entry name" value="DapF"/>
    <property type="match status" value="1"/>
</dbReference>
<dbReference type="PANTHER" id="PTHR31689:SF0">
    <property type="entry name" value="DIAMINOPIMELATE EPIMERASE"/>
    <property type="match status" value="1"/>
</dbReference>
<dbReference type="PANTHER" id="PTHR31689">
    <property type="entry name" value="DIAMINOPIMELATE EPIMERASE, CHLOROPLASTIC"/>
    <property type="match status" value="1"/>
</dbReference>
<dbReference type="Pfam" id="PF01678">
    <property type="entry name" value="DAP_epimerase"/>
    <property type="match status" value="2"/>
</dbReference>
<dbReference type="SUPFAM" id="SSF54506">
    <property type="entry name" value="Diaminopimelate epimerase-like"/>
    <property type="match status" value="1"/>
</dbReference>
<dbReference type="PROSITE" id="PS01326">
    <property type="entry name" value="DAP_EPIMERASE"/>
    <property type="match status" value="1"/>
</dbReference>